<gene>
    <name evidence="11" type="primary">RPL3</name>
    <name type="synonym">MAK8</name>
    <name type="synonym">TCM1</name>
    <name type="ordered locus">YOR063W</name>
    <name type="ORF">YOR29-14</name>
</gene>
<proteinExistence type="evidence at protein level"/>
<comment type="function">
    <text evidence="5 6">Component of the ribosome, a large ribonucleoprotein complex responsible for the synthesis of proteins in the cell (PubMed:22096102, PubMed:24865971). The small ribosomal subunit (SSU) binds messenger RNAs (mRNAs) and translates the encoded message by selecting cognate aminoacyl-transfer RNA (tRNA) molecules (PubMed:22096102). The large subunit (LSU) contains the ribosomal catalytic site termed the peptidyl transferase center (PTC), which catalyzes the formation of peptide bonds, thereby polymerizing the amino acids delivered by tRNAs into a polypeptide chain (PubMed:22096102). The nascent polypeptides leave the ribosome through a tunnel in the LSU and interact with protein factors that function in enzymatic processing, targeting, and the membrane insertion of nascent chains at the exit of the ribosomal tunnel (PubMed:22096102). uL3 plays a role in coordinating processes of accommodating the aminoacyl-tRNA in the PTC (PubMed:22096102).</text>
</comment>
<comment type="subunit">
    <text evidence="5 6 13">Component of the large ribosomal subunit (LSU). Mature yeast ribosomes consist of a small (40S) and a large (60S) subunit. The 40S small subunit contains 1 molecule of ribosomal RNA (18S rRNA) and 33 different proteins (encoded by 57 genes). The large 60S subunit contains 3 rRNA molecules (25S, 5.8S and 5S rRNA) and 46 different proteins (encoded by 81 genes). uL3 forms together with ES39L one of the contact sites for the signal recognition particle that targets ribosomes to the endoplasmic reticulum membrane (PubMed:22096102, PubMed:24865971, PubMed:9559554).</text>
</comment>
<comment type="interaction">
    <interactant intactId="EBI-15364">
        <id>P14126</id>
    </interactant>
    <interactant intactId="EBI-4024">
        <id>P17555</id>
        <label>SRV2</label>
    </interactant>
    <organismsDiffer>false</organismsDiffer>
    <experiments>3</experiments>
</comment>
<comment type="subcellular location">
    <subcellularLocation>
        <location evidence="1 5">Cytoplasm</location>
    </subcellularLocation>
</comment>
<comment type="PTM">
    <text evidence="6 7">Methylation at His-243 by HPM1 is required for proper 60S subunit assembly and promotes translational elongation fidelity.</text>
</comment>
<comment type="disruption phenotype">
    <text evidence="8">A mutant confers resistance to trichodermin, a trichotecene toxin produced by plant-pathogenic fungi.</text>
</comment>
<comment type="miscellaneous">
    <text evidence="2">Present with 450 molecules/cell in log phase SD medium.</text>
</comment>
<comment type="similarity">
    <text evidence="12">Belongs to the universal ribosomal protein uL3 family.</text>
</comment>
<feature type="initiator methionine" description="Removed" evidence="3 9">
    <location>
        <position position="1"/>
    </location>
</feature>
<feature type="chain" id="PRO_0000077251" description="Large ribosomal subunit protein uL3">
    <location>
        <begin position="2"/>
        <end position="387"/>
    </location>
</feature>
<feature type="modified residue" description="Phosphoserine" evidence="14">
    <location>
        <position position="24"/>
    </location>
</feature>
<feature type="modified residue" description="Phosphothreonine" evidence="15">
    <location>
        <position position="103"/>
    </location>
</feature>
<feature type="modified residue" description="Phosphoserine" evidence="14">
    <location>
        <position position="156"/>
    </location>
</feature>
<feature type="modified residue" description="Pros-methylhistidine" evidence="4 6 7">
    <location>
        <position position="243"/>
    </location>
</feature>
<feature type="modified residue" description="Phosphoserine" evidence="16">
    <location>
        <position position="297"/>
    </location>
</feature>
<feature type="cross-link" description="Glycyl lysine isopeptide (Lys-Gly) (interchain with G-Cter in ubiquitin)" evidence="17">
    <location>
        <position position="39"/>
    </location>
</feature>
<feature type="cross-link" description="Glycyl lysine isopeptide (Lys-Gly) (interchain with G-Cter in ubiquitin)" evidence="17">
    <location>
        <position position="136"/>
    </location>
</feature>
<feature type="mutagenesis site" description="Cells accumulate 35S and 23S pre-rRNA precursors. Cells display defects in translation elongation resulting in decreased translational accuracy." evidence="7">
    <original>H</original>
    <variation>A</variation>
    <location>
        <position position="243"/>
    </location>
</feature>
<feature type="sequence conflict" description="In Ref. 1; AAA88732." evidence="12" ref="1">
    <original>W</original>
    <variation>C</variation>
    <location>
        <position position="255"/>
    </location>
</feature>
<feature type="helix" evidence="18">
    <location>
        <begin position="14"/>
        <end position="16"/>
    </location>
</feature>
<feature type="strand" evidence="18">
    <location>
        <begin position="48"/>
        <end position="60"/>
    </location>
</feature>
<feature type="turn" evidence="18">
    <location>
        <begin position="66"/>
        <end position="69"/>
    </location>
</feature>
<feature type="strand" evidence="18">
    <location>
        <begin position="70"/>
        <end position="80"/>
    </location>
</feature>
<feature type="strand" evidence="18">
    <location>
        <begin position="214"/>
        <end position="220"/>
    </location>
</feature>
<feature type="strand" evidence="18">
    <location>
        <begin position="225"/>
        <end position="227"/>
    </location>
</feature>
<feature type="strand" evidence="18">
    <location>
        <begin position="268"/>
        <end position="271"/>
    </location>
</feature>
<feature type="strand" evidence="18">
    <location>
        <begin position="274"/>
        <end position="284"/>
    </location>
</feature>
<feature type="strand" evidence="18">
    <location>
        <begin position="297"/>
        <end position="299"/>
    </location>
</feature>
<feature type="strand" evidence="18">
    <location>
        <begin position="321"/>
        <end position="326"/>
    </location>
</feature>
<feature type="strand" evidence="18">
    <location>
        <begin position="335"/>
        <end position="339"/>
    </location>
</feature>
<feature type="helix" evidence="18">
    <location>
        <begin position="348"/>
        <end position="351"/>
    </location>
</feature>
<feature type="strand" evidence="18">
    <location>
        <begin position="355"/>
        <end position="360"/>
    </location>
</feature>
<feature type="turn" evidence="18">
    <location>
        <begin position="364"/>
        <end position="367"/>
    </location>
</feature>
<feature type="helix" evidence="18">
    <location>
        <begin position="373"/>
        <end position="380"/>
    </location>
</feature>
<name>RL3_YEAST</name>
<sequence length="387" mass="43758">MSHRKYEAPRHGHLGFLPRKRAASIRARVKAFPKDDRSKPVALTSFLGYKAGMTTIVRDLDRPGSKFHKREVVEAVTVVDTPPVVVVGVVGYVETPRGLRSLTTVWAEHLSDEVKRRFYKNWYKSKKKAFTKYSAKYAQDGAGIERELARIKKYASVVRVLVHTQIRKTPLAQKKAHLAEIQLNGGSISEKVDWAREHFEKTVAVDSVFEQNEMIDAIAVTKGHGFEGVTHRWGTKKLPRKTHRGLRKVACIGAWHPAHVMWSVARAGQRGYHSRTSINHKIYRVGKGDDEANGATSFDRTKKTITPMGGFVHYGEIKNDFIMVKGCIPGNRKRIVTLRKSLYTNTSRKALEEVSLKWIDTASKFGKGRFQTPAEKHAFMGTLKKDL</sequence>
<accession>P14126</accession>
<accession>D6W2C6</accession>
<accession>Q08459</accession>
<protein>
    <recommendedName>
        <fullName evidence="10">Large ribosomal subunit protein uL3</fullName>
    </recommendedName>
    <alternativeName>
        <fullName evidence="11">60S ribosomal protein L3</fullName>
    </alternativeName>
    <alternativeName>
        <fullName>Maintenance of killer protein 8</fullName>
    </alternativeName>
    <alternativeName>
        <fullName>RP1</fullName>
    </alternativeName>
    <alternativeName>
        <fullName>Trichodermin resistance protein</fullName>
    </alternativeName>
    <alternativeName>
        <fullName>YL1</fullName>
    </alternativeName>
</protein>
<reference key="1">
    <citation type="journal article" date="1983" name="J. Bacteriol.">
        <title>Nucleotide sequence of the tcm1 gene (ribosomal protein L3) of Saccharomyces cerevisiae.</title>
        <authorList>
            <person name="Schultz L.D."/>
            <person name="Friesen J.D."/>
        </authorList>
    </citation>
    <scope>NUCLEOTIDE SEQUENCE [GENOMIC DNA]</scope>
    <scope>DISRUPTION PHENOTYPE</scope>
    <source>
        <strain>CLP1</strain>
    </source>
</reference>
<reference key="2">
    <citation type="journal article" date="1997" name="Yeast">
        <title>The sequence of a 54.7 kb fragment of yeast chromosome XV reveals the presence of two tRNAs and 24 new open reading frames.</title>
        <authorList>
            <person name="Valens M."/>
            <person name="Bohn C."/>
            <person name="Daignan-Fornier B."/>
            <person name="Dang V.-D."/>
            <person name="Bolotin-Fukuhara M."/>
        </authorList>
    </citation>
    <scope>NUCLEOTIDE SEQUENCE [GENOMIC DNA]</scope>
</reference>
<reference key="3">
    <citation type="journal article" date="1997" name="Nature">
        <title>The nucleotide sequence of Saccharomyces cerevisiae chromosome XV.</title>
        <authorList>
            <person name="Dujon B."/>
            <person name="Albermann K."/>
            <person name="Aldea M."/>
            <person name="Alexandraki D."/>
            <person name="Ansorge W."/>
            <person name="Arino J."/>
            <person name="Benes V."/>
            <person name="Bohn C."/>
            <person name="Bolotin-Fukuhara M."/>
            <person name="Bordonne R."/>
            <person name="Boyer J."/>
            <person name="Camasses A."/>
            <person name="Casamayor A."/>
            <person name="Casas C."/>
            <person name="Cheret G."/>
            <person name="Cziepluch C."/>
            <person name="Daignan-Fornier B."/>
            <person name="Dang V.-D."/>
            <person name="de Haan M."/>
            <person name="Delius H."/>
            <person name="Durand P."/>
            <person name="Fairhead C."/>
            <person name="Feldmann H."/>
            <person name="Gaillon L."/>
            <person name="Galisson F."/>
            <person name="Gamo F.-J."/>
            <person name="Gancedo C."/>
            <person name="Goffeau A."/>
            <person name="Goulding S.E."/>
            <person name="Grivell L.A."/>
            <person name="Habbig B."/>
            <person name="Hand N.J."/>
            <person name="Hani J."/>
            <person name="Hattenhorst U."/>
            <person name="Hebling U."/>
            <person name="Hernando Y."/>
            <person name="Herrero E."/>
            <person name="Heumann K."/>
            <person name="Hiesel R."/>
            <person name="Hilger F."/>
            <person name="Hofmann B."/>
            <person name="Hollenberg C.P."/>
            <person name="Hughes B."/>
            <person name="Jauniaux J.-C."/>
            <person name="Kalogeropoulos A."/>
            <person name="Katsoulou C."/>
            <person name="Kordes E."/>
            <person name="Lafuente M.J."/>
            <person name="Landt O."/>
            <person name="Louis E.J."/>
            <person name="Maarse A.C."/>
            <person name="Madania A."/>
            <person name="Mannhaupt G."/>
            <person name="Marck C."/>
            <person name="Martin R.P."/>
            <person name="Mewes H.-W."/>
            <person name="Michaux G."/>
            <person name="Paces V."/>
            <person name="Parle-McDermott A.G."/>
            <person name="Pearson B.M."/>
            <person name="Perrin A."/>
            <person name="Pettersson B."/>
            <person name="Poch O."/>
            <person name="Pohl T.M."/>
            <person name="Poirey R."/>
            <person name="Portetelle D."/>
            <person name="Pujol A."/>
            <person name="Purnelle B."/>
            <person name="Ramezani Rad M."/>
            <person name="Rechmann S."/>
            <person name="Schwager C."/>
            <person name="Schweizer M."/>
            <person name="Sor F."/>
            <person name="Sterky F."/>
            <person name="Tarassov I.A."/>
            <person name="Teodoru C."/>
            <person name="Tettelin H."/>
            <person name="Thierry A."/>
            <person name="Tobiasch E."/>
            <person name="Tzermia M."/>
            <person name="Uhlen M."/>
            <person name="Unseld M."/>
            <person name="Valens M."/>
            <person name="Vandenbol M."/>
            <person name="Vetter I."/>
            <person name="Vlcek C."/>
            <person name="Voet M."/>
            <person name="Volckaert G."/>
            <person name="Voss H."/>
            <person name="Wambutt R."/>
            <person name="Wedler H."/>
            <person name="Wiemann S."/>
            <person name="Winsor B."/>
            <person name="Wolfe K.H."/>
            <person name="Zollner A."/>
            <person name="Zumstein E."/>
            <person name="Kleine K."/>
        </authorList>
    </citation>
    <scope>NUCLEOTIDE SEQUENCE [LARGE SCALE GENOMIC DNA]</scope>
    <source>
        <strain>ATCC 204508 / S288c</strain>
    </source>
</reference>
<reference key="4">
    <citation type="journal article" date="2014" name="G3 (Bethesda)">
        <title>The reference genome sequence of Saccharomyces cerevisiae: Then and now.</title>
        <authorList>
            <person name="Engel S.R."/>
            <person name="Dietrich F.S."/>
            <person name="Fisk D.G."/>
            <person name="Binkley G."/>
            <person name="Balakrishnan R."/>
            <person name="Costanzo M.C."/>
            <person name="Dwight S.S."/>
            <person name="Hitz B.C."/>
            <person name="Karra K."/>
            <person name="Nash R.S."/>
            <person name="Weng S."/>
            <person name="Wong E.D."/>
            <person name="Lloyd P."/>
            <person name="Skrzypek M.S."/>
            <person name="Miyasato S.R."/>
            <person name="Simison M."/>
            <person name="Cherry J.M."/>
        </authorList>
    </citation>
    <scope>GENOME REANNOTATION</scope>
    <source>
        <strain>ATCC 204508 / S288c</strain>
    </source>
</reference>
<reference key="5">
    <citation type="journal article" date="1983" name="Mol. Gen. Genet.">
        <title>Yeast ribosomal proteins: VII. Cytoplasmic ribosomal proteins from Schizosaccharomyces pombe.</title>
        <authorList>
            <person name="Otaka E."/>
            <person name="Higo K."/>
            <person name="Itoh T."/>
        </authorList>
    </citation>
    <scope>PROTEIN SEQUENCE OF 2-20</scope>
</reference>
<reference key="6">
    <citation type="journal article" date="1992" name="J. Biol. Chem.">
        <title>NH2-terminal acetylation of ribosomal proteins of Saccharomyces cerevisiae.</title>
        <authorList>
            <person name="Takakura H."/>
            <person name="Tsunasawa S."/>
            <person name="Miyagi M."/>
            <person name="Warner J.R."/>
        </authorList>
    </citation>
    <scope>PROTEIN SEQUENCE OF 2-10</scope>
</reference>
<reference key="7">
    <citation type="journal article" date="1998" name="Yeast">
        <title>The list of cytoplasmic ribosomal proteins of Saccharomyces cerevisiae.</title>
        <authorList>
            <person name="Planta R.J."/>
            <person name="Mager W.H."/>
        </authorList>
    </citation>
    <scope>NOMENCLATURE</scope>
    <scope>SUBUNIT</scope>
</reference>
<reference key="8">
    <citation type="journal article" date="2003" name="Nature">
        <title>Global analysis of protein localization in budding yeast.</title>
        <authorList>
            <person name="Huh W.-K."/>
            <person name="Falvo J.V."/>
            <person name="Gerke L.C."/>
            <person name="Carroll A.S."/>
            <person name="Howson R.W."/>
            <person name="Weissman J.S."/>
            <person name="O'Shea E.K."/>
        </authorList>
    </citation>
    <scope>SUBCELLULAR LOCATION [LARGE SCALE ANALYSIS]</scope>
</reference>
<reference key="9">
    <citation type="journal article" date="2003" name="Nature">
        <title>Global analysis of protein expression in yeast.</title>
        <authorList>
            <person name="Ghaemmaghami S."/>
            <person name="Huh W.-K."/>
            <person name="Bower K."/>
            <person name="Howson R.W."/>
            <person name="Belle A."/>
            <person name="Dephoure N."/>
            <person name="O'Shea E.K."/>
            <person name="Weissman J.S."/>
        </authorList>
    </citation>
    <scope>LEVEL OF PROTEIN EXPRESSION [LARGE SCALE ANALYSIS]</scope>
</reference>
<reference key="10">
    <citation type="journal article" date="2007" name="J. Proteome Res.">
        <title>Large-scale phosphorylation analysis of alpha-factor-arrested Saccharomyces cerevisiae.</title>
        <authorList>
            <person name="Li X."/>
            <person name="Gerber S.A."/>
            <person name="Rudner A.D."/>
            <person name="Beausoleil S.A."/>
            <person name="Haas W."/>
            <person name="Villen J."/>
            <person name="Elias J.E."/>
            <person name="Gygi S.P."/>
        </authorList>
    </citation>
    <scope>PHOSPHORYLATION [LARGE SCALE ANALYSIS] AT THR-103</scope>
    <scope>IDENTIFICATION BY MASS SPECTROMETRY [LARGE SCALE ANALYSIS]</scope>
    <source>
        <strain>ADR376</strain>
    </source>
</reference>
<reference key="11">
    <citation type="journal article" date="2007" name="Proc. Natl. Acad. Sci. U.S.A.">
        <title>Analysis of phosphorylation sites on proteins from Saccharomyces cerevisiae by electron transfer dissociation (ETD) mass spectrometry.</title>
        <authorList>
            <person name="Chi A."/>
            <person name="Huttenhower C."/>
            <person name="Geer L.Y."/>
            <person name="Coon J.J."/>
            <person name="Syka J.E.P."/>
            <person name="Bai D.L."/>
            <person name="Shabanowitz J."/>
            <person name="Burke D.J."/>
            <person name="Troyanskaya O.G."/>
            <person name="Hunt D.F."/>
        </authorList>
    </citation>
    <scope>PHOSPHORYLATION [LARGE SCALE ANALYSIS] AT SER-24 AND SER-156</scope>
    <scope>IDENTIFICATION BY MASS SPECTROMETRY [LARGE SCALE ANALYSIS]</scope>
</reference>
<reference key="12">
    <citation type="journal article" date="2008" name="Mol. Cell. Proteomics">
        <title>A multidimensional chromatography technology for in-depth phosphoproteome analysis.</title>
        <authorList>
            <person name="Albuquerque C.P."/>
            <person name="Smolka M.B."/>
            <person name="Payne S.H."/>
            <person name="Bafna V."/>
            <person name="Eng J."/>
            <person name="Zhou H."/>
        </authorList>
    </citation>
    <scope>IDENTIFICATION BY MASS SPECTROMETRY [LARGE SCALE ANALYSIS]</scope>
</reference>
<reference key="13">
    <citation type="journal article" date="2009" name="Science">
        <title>Global analysis of Cdk1 substrate phosphorylation sites provides insights into evolution.</title>
        <authorList>
            <person name="Holt L.J."/>
            <person name="Tuch B.B."/>
            <person name="Villen J."/>
            <person name="Johnson A.D."/>
            <person name="Gygi S.P."/>
            <person name="Morgan D.O."/>
        </authorList>
    </citation>
    <scope>PHOSPHORYLATION [LARGE SCALE ANALYSIS] AT SER-297</scope>
    <scope>IDENTIFICATION BY MASS SPECTROMETRY [LARGE SCALE ANALYSIS]</scope>
</reference>
<reference key="14">
    <citation type="journal article" date="2010" name="J. Biol. Chem.">
        <title>A novel 3-methylhistidine modification of yeast ribosomal protein Rpl3 is dependent upon the YIL110W methyltransferase.</title>
        <authorList>
            <person name="Webb K.J."/>
            <person name="Zurita-Lopez C.I."/>
            <person name="Al-Hadid Q."/>
            <person name="Laganowsky A."/>
            <person name="Young B.D."/>
            <person name="Lipson R.S."/>
            <person name="Souda P."/>
            <person name="Faull K.F."/>
            <person name="Whitelegge J.P."/>
            <person name="Clarke S.G."/>
        </authorList>
    </citation>
    <scope>METHYLATION AT HIS-243</scope>
</reference>
<reference key="15">
    <citation type="journal article" date="2012" name="Proteomics">
        <title>Sites of ubiquitin attachment in Saccharomyces cerevisiae.</title>
        <authorList>
            <person name="Starita L.M."/>
            <person name="Lo R.S."/>
            <person name="Eng J.K."/>
            <person name="von Haller P.D."/>
            <person name="Fields S."/>
        </authorList>
    </citation>
    <scope>UBIQUITINATION [LARGE SCALE ANALYSIS] AT LYS-39 AND LYS-136</scope>
    <scope>IDENTIFICATION BY MASS SPECTROMETRY [LARGE SCALE ANALYSIS]</scope>
</reference>
<reference key="16">
    <citation type="journal article" date="2014" name="Curr. Opin. Struct. Biol.">
        <title>A new system for naming ribosomal proteins.</title>
        <authorList>
            <person name="Ban N."/>
            <person name="Beckmann R."/>
            <person name="Cate J.H.D."/>
            <person name="Dinman J.D."/>
            <person name="Dragon F."/>
            <person name="Ellis S.R."/>
            <person name="Lafontaine D.L.J."/>
            <person name="Lindahl L."/>
            <person name="Liljas A."/>
            <person name="Lipton J.M."/>
            <person name="McAlear M.A."/>
            <person name="Moore P.B."/>
            <person name="Noller H.F."/>
            <person name="Ortega J."/>
            <person name="Panse V.G."/>
            <person name="Ramakrishnan V."/>
            <person name="Spahn C.M.T."/>
            <person name="Steitz T.A."/>
            <person name="Tchorzewski M."/>
            <person name="Tollervey D."/>
            <person name="Warren A.J."/>
            <person name="Williamson J.R."/>
            <person name="Wilson D."/>
            <person name="Yonath A."/>
            <person name="Yusupov M."/>
        </authorList>
    </citation>
    <scope>NOMENCLATURE</scope>
</reference>
<reference key="17">
    <citation type="journal article" date="2014" name="Mol. Cell. Biol.">
        <title>Histidine methylation of yeast ribosomal protein Rpl3p is required for proper 60S subunit assembly.</title>
        <authorList>
            <person name="Al-Hadid Q."/>
            <person name="Roy K."/>
            <person name="Munroe W."/>
            <person name="Dzialo M.C."/>
            <person name="Chanfreau G.F."/>
            <person name="Clarke S.G."/>
        </authorList>
    </citation>
    <scope>FUNCTION</scope>
    <scope>METHYLATION AT HIS-243</scope>
</reference>
<reference key="18">
    <citation type="journal article" date="2016" name="RNA">
        <title>Methylation of yeast ribosomal protein Rpl3 promotes translational elongation fidelity.</title>
        <authorList>
            <person name="Al-Hadid Q."/>
            <person name="Roy K."/>
            <person name="Chanfreau G."/>
            <person name="Clarke S.G."/>
        </authorList>
    </citation>
    <scope>METHYLATION AT HIS-243</scope>
    <scope>MUTAGENESIS OF HIS-243</scope>
</reference>
<reference key="19">
    <citation type="journal article" date="2001" name="Cell">
        <title>Structure of the 80S ribosome from Saccharomyces cerevisiae -- tRNA-ribosome and subunit-subunit interactions.</title>
        <authorList>
            <person name="Spahn C.M.T."/>
            <person name="Beckmann R."/>
            <person name="Eswar N."/>
            <person name="Penczek P.A."/>
            <person name="Sali A."/>
            <person name="Blobel G."/>
            <person name="Frank J."/>
        </authorList>
    </citation>
    <scope>3D-STRUCTURE MODELING OF 8-366</scope>
    <scope>ELECTRON MICROSCOPY</scope>
</reference>
<reference key="20">
    <citation type="journal article" date="2004" name="EMBO J.">
        <title>Domain movements of elongation factor eEF2 and the eukaryotic 80S ribosome facilitate tRNA translocation.</title>
        <authorList>
            <person name="Spahn C.M.T."/>
            <person name="Gomez-Lorenzo M.G."/>
            <person name="Grassucci R.A."/>
            <person name="Joergensen R."/>
            <person name="Andersen G.R."/>
            <person name="Beckmann R."/>
            <person name="Penczek P.A."/>
            <person name="Ballesta J.P.G."/>
            <person name="Frank J."/>
        </authorList>
    </citation>
    <scope>3D-STRUCTURE MODELING</scope>
    <scope>ELECTRON MICROSCOPY</scope>
</reference>
<reference key="21">
    <citation type="journal article" date="2010" name="Science">
        <title>Crystal structure of the eukaryotic ribosome.</title>
        <authorList>
            <person name="Ben-Shem A."/>
            <person name="Jenner L."/>
            <person name="Yusupova G."/>
            <person name="Yusupov M."/>
        </authorList>
    </citation>
    <scope>X-RAY CRYSTALLOGRAPHY (4.0 ANGSTROMS) OF 80S RIBOSOME</scope>
</reference>
<reference key="22">
    <citation type="journal article" date="2011" name="Science">
        <title>The structure of the eukaryotic ribosome at 3.0 A resolution.</title>
        <authorList>
            <person name="Ben-Shem A."/>
            <person name="Garreau de Loubresse N."/>
            <person name="Melnikov S."/>
            <person name="Jenner L."/>
            <person name="Yusupova G."/>
            <person name="Yusupov M."/>
        </authorList>
    </citation>
    <scope>X-RAY CRYSTALLOGRAPHY (3.0 ANGSTROMS) OF 80S RIBOSOME</scope>
    <scope>FUNCTION</scope>
    <scope>SUBUNIT</scope>
    <scope>SUBCELLULAR LOCATION</scope>
</reference>
<evidence type="ECO:0000269" key="1">
    <source>
    </source>
</evidence>
<evidence type="ECO:0000269" key="2">
    <source>
    </source>
</evidence>
<evidence type="ECO:0000269" key="3">
    <source>
    </source>
</evidence>
<evidence type="ECO:0000269" key="4">
    <source>
    </source>
</evidence>
<evidence type="ECO:0000269" key="5">
    <source>
    </source>
</evidence>
<evidence type="ECO:0000269" key="6">
    <source>
    </source>
</evidence>
<evidence type="ECO:0000269" key="7">
    <source>
    </source>
</evidence>
<evidence type="ECO:0000269" key="8">
    <source>
    </source>
</evidence>
<evidence type="ECO:0000269" key="9">
    <source>
    </source>
</evidence>
<evidence type="ECO:0000303" key="10">
    <source>
    </source>
</evidence>
<evidence type="ECO:0000303" key="11">
    <source>
    </source>
</evidence>
<evidence type="ECO:0000305" key="12"/>
<evidence type="ECO:0000305" key="13">
    <source>
    </source>
</evidence>
<evidence type="ECO:0007744" key="14">
    <source>
    </source>
</evidence>
<evidence type="ECO:0007744" key="15">
    <source>
    </source>
</evidence>
<evidence type="ECO:0007744" key="16">
    <source>
    </source>
</evidence>
<evidence type="ECO:0007744" key="17">
    <source>
    </source>
</evidence>
<evidence type="ECO:0007829" key="18">
    <source>
        <dbReference type="PDB" id="7NAF"/>
    </source>
</evidence>
<keyword id="KW-0002">3D-structure</keyword>
<keyword id="KW-0963">Cytoplasm</keyword>
<keyword id="KW-0903">Direct protein sequencing</keyword>
<keyword id="KW-1017">Isopeptide bond</keyword>
<keyword id="KW-0488">Methylation</keyword>
<keyword id="KW-0597">Phosphoprotein</keyword>
<keyword id="KW-1185">Reference proteome</keyword>
<keyword id="KW-0687">Ribonucleoprotein</keyword>
<keyword id="KW-0689">Ribosomal protein</keyword>
<keyword id="KW-0832">Ubl conjugation</keyword>
<organism>
    <name type="scientific">Saccharomyces cerevisiae (strain ATCC 204508 / S288c)</name>
    <name type="common">Baker's yeast</name>
    <dbReference type="NCBI Taxonomy" id="559292"/>
    <lineage>
        <taxon>Eukaryota</taxon>
        <taxon>Fungi</taxon>
        <taxon>Dikarya</taxon>
        <taxon>Ascomycota</taxon>
        <taxon>Saccharomycotina</taxon>
        <taxon>Saccharomycetes</taxon>
        <taxon>Saccharomycetales</taxon>
        <taxon>Saccharomycetaceae</taxon>
        <taxon>Saccharomyces</taxon>
    </lineage>
</organism>
<dbReference type="EMBL" id="J01351">
    <property type="protein sequence ID" value="AAA88732.1"/>
    <property type="molecule type" value="Genomic_DNA"/>
</dbReference>
<dbReference type="EMBL" id="Z74971">
    <property type="protein sequence ID" value="CAA99256.1"/>
    <property type="molecule type" value="Genomic_DNA"/>
</dbReference>
<dbReference type="EMBL" id="Z70678">
    <property type="protein sequence ID" value="CAA94548.1"/>
    <property type="molecule type" value="Genomic_DNA"/>
</dbReference>
<dbReference type="EMBL" id="BK006948">
    <property type="protein sequence ID" value="DAA10842.1"/>
    <property type="molecule type" value="Genomic_DNA"/>
</dbReference>
<dbReference type="PIR" id="S66946">
    <property type="entry name" value="R5BY4E"/>
</dbReference>
<dbReference type="RefSeq" id="NP_014706.1">
    <property type="nucleotide sequence ID" value="NM_001183482.1"/>
</dbReference>
<dbReference type="PDB" id="3J6X">
    <property type="method" value="EM"/>
    <property type="resolution" value="6.10 A"/>
    <property type="chains" value="L3=1-387"/>
</dbReference>
<dbReference type="PDB" id="3J6Y">
    <property type="method" value="EM"/>
    <property type="resolution" value="6.10 A"/>
    <property type="chains" value="L3=1-387"/>
</dbReference>
<dbReference type="PDB" id="3J77">
    <property type="method" value="EM"/>
    <property type="resolution" value="6.20 A"/>
    <property type="chains" value="L3=1-387"/>
</dbReference>
<dbReference type="PDB" id="3J78">
    <property type="method" value="EM"/>
    <property type="resolution" value="6.30 A"/>
    <property type="chains" value="L3=1-387"/>
</dbReference>
<dbReference type="PDB" id="3JCT">
    <property type="method" value="EM"/>
    <property type="resolution" value="3.08 A"/>
    <property type="chains" value="B=1-387"/>
</dbReference>
<dbReference type="PDB" id="4U3M">
    <property type="method" value="X-ray"/>
    <property type="resolution" value="3.00 A"/>
    <property type="chains" value="L3/l3=2-387"/>
</dbReference>
<dbReference type="PDB" id="4U3N">
    <property type="method" value="X-ray"/>
    <property type="resolution" value="3.20 A"/>
    <property type="chains" value="L3/l3=2-387"/>
</dbReference>
<dbReference type="PDB" id="4U3U">
    <property type="method" value="X-ray"/>
    <property type="resolution" value="2.90 A"/>
    <property type="chains" value="L3/l3=2-387"/>
</dbReference>
<dbReference type="PDB" id="4U4N">
    <property type="method" value="X-ray"/>
    <property type="resolution" value="3.10 A"/>
    <property type="chains" value="L3/l3=2-387"/>
</dbReference>
<dbReference type="PDB" id="4U4O">
    <property type="method" value="X-ray"/>
    <property type="resolution" value="3.60 A"/>
    <property type="chains" value="L3/l3=2-387"/>
</dbReference>
<dbReference type="PDB" id="4U4Q">
    <property type="method" value="X-ray"/>
    <property type="resolution" value="3.00 A"/>
    <property type="chains" value="L3/l3=2-387"/>
</dbReference>
<dbReference type="PDB" id="4U4R">
    <property type="method" value="X-ray"/>
    <property type="resolution" value="2.80 A"/>
    <property type="chains" value="L3/l3=2-387"/>
</dbReference>
<dbReference type="PDB" id="4U4U">
    <property type="method" value="X-ray"/>
    <property type="resolution" value="3.00 A"/>
    <property type="chains" value="L3/l3=2-387"/>
</dbReference>
<dbReference type="PDB" id="4U4Y">
    <property type="method" value="X-ray"/>
    <property type="resolution" value="3.20 A"/>
    <property type="chains" value="L3/l3=2-387"/>
</dbReference>
<dbReference type="PDB" id="4U4Z">
    <property type="method" value="X-ray"/>
    <property type="resolution" value="3.10 A"/>
    <property type="chains" value="L3/l3=2-387"/>
</dbReference>
<dbReference type="PDB" id="4U50">
    <property type="method" value="X-ray"/>
    <property type="resolution" value="3.20 A"/>
    <property type="chains" value="L3/l3=2-387"/>
</dbReference>
<dbReference type="PDB" id="4U51">
    <property type="method" value="X-ray"/>
    <property type="resolution" value="3.20 A"/>
    <property type="chains" value="L3/l3=2-387"/>
</dbReference>
<dbReference type="PDB" id="4U52">
    <property type="method" value="X-ray"/>
    <property type="resolution" value="3.00 A"/>
    <property type="chains" value="L3/l3=2-387"/>
</dbReference>
<dbReference type="PDB" id="4U53">
    <property type="method" value="X-ray"/>
    <property type="resolution" value="3.30 A"/>
    <property type="chains" value="L3/l3=2-387"/>
</dbReference>
<dbReference type="PDB" id="4U55">
    <property type="method" value="X-ray"/>
    <property type="resolution" value="3.20 A"/>
    <property type="chains" value="L3/l3=2-387"/>
</dbReference>
<dbReference type="PDB" id="4U56">
    <property type="method" value="X-ray"/>
    <property type="resolution" value="3.45 A"/>
    <property type="chains" value="L3/l3=2-387"/>
</dbReference>
<dbReference type="PDB" id="4U6F">
    <property type="method" value="X-ray"/>
    <property type="resolution" value="3.10 A"/>
    <property type="chains" value="L3/l3=2-387"/>
</dbReference>
<dbReference type="PDB" id="4V4B">
    <property type="method" value="EM"/>
    <property type="resolution" value="11.70 A"/>
    <property type="chains" value="BC=2-387"/>
</dbReference>
<dbReference type="PDB" id="4V5Z">
    <property type="method" value="EM"/>
    <property type="resolution" value="8.70 A"/>
    <property type="chains" value="Bb=1-386"/>
</dbReference>
<dbReference type="PDB" id="4V6I">
    <property type="method" value="EM"/>
    <property type="resolution" value="8.80 A"/>
    <property type="chains" value="BC=1-387"/>
</dbReference>
<dbReference type="PDB" id="4V7F">
    <property type="method" value="EM"/>
    <property type="resolution" value="8.70 A"/>
    <property type="chains" value="C=1-387"/>
</dbReference>
<dbReference type="PDB" id="4V7R">
    <property type="method" value="X-ray"/>
    <property type="resolution" value="4.00 A"/>
    <property type="chains" value="BC/DC=1-387"/>
</dbReference>
<dbReference type="PDB" id="4V88">
    <property type="method" value="X-ray"/>
    <property type="resolution" value="3.00 A"/>
    <property type="chains" value="BB/DB=1-387"/>
</dbReference>
<dbReference type="PDB" id="4V8T">
    <property type="method" value="EM"/>
    <property type="resolution" value="8.10 A"/>
    <property type="chains" value="B=1-387"/>
</dbReference>
<dbReference type="PDB" id="4V8Y">
    <property type="method" value="EM"/>
    <property type="resolution" value="4.30 A"/>
    <property type="chains" value="BB=2-387"/>
</dbReference>
<dbReference type="PDB" id="4V8Z">
    <property type="method" value="EM"/>
    <property type="resolution" value="6.60 A"/>
    <property type="chains" value="BB=2-387"/>
</dbReference>
<dbReference type="PDB" id="4V91">
    <property type="method" value="EM"/>
    <property type="resolution" value="3.70 A"/>
    <property type="chains" value="B=1-387"/>
</dbReference>
<dbReference type="PDB" id="5APN">
    <property type="method" value="EM"/>
    <property type="resolution" value="3.91 A"/>
    <property type="chains" value="B=1-387"/>
</dbReference>
<dbReference type="PDB" id="5APO">
    <property type="method" value="EM"/>
    <property type="resolution" value="3.41 A"/>
    <property type="chains" value="B=1-387"/>
</dbReference>
<dbReference type="PDB" id="5DAT">
    <property type="method" value="X-ray"/>
    <property type="resolution" value="3.15 A"/>
    <property type="chains" value="L3/l3=2-387"/>
</dbReference>
<dbReference type="PDB" id="5DC3">
    <property type="method" value="X-ray"/>
    <property type="resolution" value="3.25 A"/>
    <property type="chains" value="L3/l3=2-387"/>
</dbReference>
<dbReference type="PDB" id="5DGE">
    <property type="method" value="X-ray"/>
    <property type="resolution" value="3.45 A"/>
    <property type="chains" value="L3/l3=2-387"/>
</dbReference>
<dbReference type="PDB" id="5DGF">
    <property type="method" value="X-ray"/>
    <property type="resolution" value="3.30 A"/>
    <property type="chains" value="L3/l3=2-387"/>
</dbReference>
<dbReference type="PDB" id="5DGV">
    <property type="method" value="X-ray"/>
    <property type="resolution" value="3.10 A"/>
    <property type="chains" value="L3/l3=2-387"/>
</dbReference>
<dbReference type="PDB" id="5FCI">
    <property type="method" value="X-ray"/>
    <property type="resolution" value="3.40 A"/>
    <property type="chains" value="L3/l3=2-387"/>
</dbReference>
<dbReference type="PDB" id="5FCJ">
    <property type="method" value="X-ray"/>
    <property type="resolution" value="3.10 A"/>
    <property type="chains" value="L3/l3=2-387"/>
</dbReference>
<dbReference type="PDB" id="5GAK">
    <property type="method" value="EM"/>
    <property type="resolution" value="3.88 A"/>
    <property type="chains" value="F=1-387"/>
</dbReference>
<dbReference type="PDB" id="5H4P">
    <property type="method" value="EM"/>
    <property type="resolution" value="3.07 A"/>
    <property type="chains" value="B=1-387"/>
</dbReference>
<dbReference type="PDB" id="5I4L">
    <property type="method" value="X-ray"/>
    <property type="resolution" value="3.10 A"/>
    <property type="chains" value="L3/l3=2-387"/>
</dbReference>
<dbReference type="PDB" id="5JCS">
    <property type="method" value="EM"/>
    <property type="resolution" value="9.50 A"/>
    <property type="chains" value="B=1-387"/>
</dbReference>
<dbReference type="PDB" id="5JUO">
    <property type="method" value="EM"/>
    <property type="resolution" value="4.00 A"/>
    <property type="chains" value="G=1-387"/>
</dbReference>
<dbReference type="PDB" id="5JUP">
    <property type="method" value="EM"/>
    <property type="resolution" value="3.50 A"/>
    <property type="chains" value="G=1-387"/>
</dbReference>
<dbReference type="PDB" id="5JUS">
    <property type="method" value="EM"/>
    <property type="resolution" value="4.20 A"/>
    <property type="chains" value="G=1-387"/>
</dbReference>
<dbReference type="PDB" id="5JUT">
    <property type="method" value="EM"/>
    <property type="resolution" value="4.00 A"/>
    <property type="chains" value="G=1-387"/>
</dbReference>
<dbReference type="PDB" id="5JUU">
    <property type="method" value="EM"/>
    <property type="resolution" value="4.00 A"/>
    <property type="chains" value="G=1-387"/>
</dbReference>
<dbReference type="PDB" id="5LYB">
    <property type="method" value="X-ray"/>
    <property type="resolution" value="3.25 A"/>
    <property type="chains" value="L3/l3=2-387"/>
</dbReference>
<dbReference type="PDB" id="5M1J">
    <property type="method" value="EM"/>
    <property type="resolution" value="3.30 A"/>
    <property type="chains" value="B5=2-387"/>
</dbReference>
<dbReference type="PDB" id="5MC6">
    <property type="method" value="EM"/>
    <property type="resolution" value="3.80 A"/>
    <property type="chains" value="BA=1-387"/>
</dbReference>
<dbReference type="PDB" id="5MEI">
    <property type="method" value="X-ray"/>
    <property type="resolution" value="3.50 A"/>
    <property type="chains" value="CE/k=2-387"/>
</dbReference>
<dbReference type="PDB" id="5NDG">
    <property type="method" value="X-ray"/>
    <property type="resolution" value="3.70 A"/>
    <property type="chains" value="L3/l3=2-387"/>
</dbReference>
<dbReference type="PDB" id="5NDV">
    <property type="method" value="X-ray"/>
    <property type="resolution" value="3.30 A"/>
    <property type="chains" value="L3/l3=2-387"/>
</dbReference>
<dbReference type="PDB" id="5NDW">
    <property type="method" value="X-ray"/>
    <property type="resolution" value="3.70 A"/>
    <property type="chains" value="L3/l3=2-387"/>
</dbReference>
<dbReference type="PDB" id="5OBM">
    <property type="method" value="X-ray"/>
    <property type="resolution" value="3.40 A"/>
    <property type="chains" value="L3/l3=2-387"/>
</dbReference>
<dbReference type="PDB" id="5ON6">
    <property type="method" value="X-ray"/>
    <property type="resolution" value="3.10 A"/>
    <property type="chains" value="CE/k=2-387"/>
</dbReference>
<dbReference type="PDB" id="5T62">
    <property type="method" value="EM"/>
    <property type="resolution" value="3.30 A"/>
    <property type="chains" value="E=1-387"/>
</dbReference>
<dbReference type="PDB" id="5T6R">
    <property type="method" value="EM"/>
    <property type="resolution" value="4.50 A"/>
    <property type="chains" value="E=1-387"/>
</dbReference>
<dbReference type="PDB" id="5TBW">
    <property type="method" value="X-ray"/>
    <property type="resolution" value="3.00 A"/>
    <property type="chains" value="CE/k=2-387"/>
</dbReference>
<dbReference type="PDB" id="5TGA">
    <property type="method" value="X-ray"/>
    <property type="resolution" value="3.30 A"/>
    <property type="chains" value="L3/l3=2-387"/>
</dbReference>
<dbReference type="PDB" id="5TGM">
    <property type="method" value="X-ray"/>
    <property type="resolution" value="3.50 A"/>
    <property type="chains" value="L3/l3=2-387"/>
</dbReference>
<dbReference type="PDB" id="5Z3G">
    <property type="method" value="EM"/>
    <property type="resolution" value="3.65 A"/>
    <property type="chains" value="F=1-387"/>
</dbReference>
<dbReference type="PDB" id="6C0F">
    <property type="method" value="EM"/>
    <property type="resolution" value="3.70 A"/>
    <property type="chains" value="B=1-387"/>
</dbReference>
<dbReference type="PDB" id="6ELZ">
    <property type="method" value="EM"/>
    <property type="resolution" value="3.30 A"/>
    <property type="chains" value="B=1-387"/>
</dbReference>
<dbReference type="PDB" id="6EM1">
    <property type="method" value="EM"/>
    <property type="resolution" value="3.60 A"/>
    <property type="chains" value="B=1-387"/>
</dbReference>
<dbReference type="PDB" id="6EM4">
    <property type="method" value="EM"/>
    <property type="resolution" value="4.10 A"/>
    <property type="chains" value="B=1-387"/>
</dbReference>
<dbReference type="PDB" id="6EM5">
    <property type="method" value="EM"/>
    <property type="resolution" value="4.30 A"/>
    <property type="chains" value="B=1-387"/>
</dbReference>
<dbReference type="PDB" id="6FT6">
    <property type="method" value="EM"/>
    <property type="resolution" value="3.90 A"/>
    <property type="chains" value="B=1-387"/>
</dbReference>
<dbReference type="PDB" id="6GQ1">
    <property type="method" value="EM"/>
    <property type="resolution" value="4.40 A"/>
    <property type="chains" value="B=2-387"/>
</dbReference>
<dbReference type="PDB" id="6GQB">
    <property type="method" value="EM"/>
    <property type="resolution" value="3.90 A"/>
    <property type="chains" value="B=2-387"/>
</dbReference>
<dbReference type="PDB" id="6GQV">
    <property type="method" value="EM"/>
    <property type="resolution" value="4.00 A"/>
    <property type="chains" value="B=2-387"/>
</dbReference>
<dbReference type="PDB" id="6HD7">
    <property type="method" value="EM"/>
    <property type="resolution" value="3.40 A"/>
    <property type="chains" value="F=1-387"/>
</dbReference>
<dbReference type="PDB" id="6HHQ">
    <property type="method" value="X-ray"/>
    <property type="resolution" value="3.10 A"/>
    <property type="chains" value="CE/k=1-387"/>
</dbReference>
<dbReference type="PDB" id="6I7O">
    <property type="method" value="EM"/>
    <property type="resolution" value="5.30 A"/>
    <property type="chains" value="BA/YA=2-387"/>
</dbReference>
<dbReference type="PDB" id="6M62">
    <property type="method" value="EM"/>
    <property type="resolution" value="3.20 A"/>
    <property type="chains" value="B=1-387"/>
</dbReference>
<dbReference type="PDB" id="6N8J">
    <property type="method" value="EM"/>
    <property type="resolution" value="3.50 A"/>
    <property type="chains" value="B=1-387"/>
</dbReference>
<dbReference type="PDB" id="6N8K">
    <property type="method" value="EM"/>
    <property type="resolution" value="3.60 A"/>
    <property type="chains" value="B=1-387"/>
</dbReference>
<dbReference type="PDB" id="6N8L">
    <property type="method" value="EM"/>
    <property type="resolution" value="3.60 A"/>
    <property type="chains" value="B=1-387"/>
</dbReference>
<dbReference type="PDB" id="6N8M">
    <property type="method" value="EM"/>
    <property type="resolution" value="3.50 A"/>
    <property type="chains" value="E=1-387"/>
</dbReference>
<dbReference type="PDB" id="6N8N">
    <property type="method" value="EM"/>
    <property type="resolution" value="3.80 A"/>
    <property type="chains" value="E=1-387"/>
</dbReference>
<dbReference type="PDB" id="6N8O">
    <property type="method" value="EM"/>
    <property type="resolution" value="3.50 A"/>
    <property type="chains" value="E=1-387"/>
</dbReference>
<dbReference type="PDB" id="6OIG">
    <property type="method" value="EM"/>
    <property type="resolution" value="3.80 A"/>
    <property type="chains" value="B=2-387"/>
</dbReference>
<dbReference type="PDB" id="6Q8Y">
    <property type="method" value="EM"/>
    <property type="resolution" value="3.10 A"/>
    <property type="chains" value="BA=2-387"/>
</dbReference>
<dbReference type="PDB" id="6QIK">
    <property type="method" value="EM"/>
    <property type="resolution" value="3.10 A"/>
    <property type="chains" value="C=1-387"/>
</dbReference>
<dbReference type="PDB" id="6QT0">
    <property type="method" value="EM"/>
    <property type="resolution" value="3.40 A"/>
    <property type="chains" value="C=1-387"/>
</dbReference>
<dbReference type="PDB" id="6QTZ">
    <property type="method" value="EM"/>
    <property type="resolution" value="3.50 A"/>
    <property type="chains" value="C=1-387"/>
</dbReference>
<dbReference type="PDB" id="6R84">
    <property type="method" value="EM"/>
    <property type="resolution" value="3.60 A"/>
    <property type="chains" value="F=2-387"/>
</dbReference>
<dbReference type="PDB" id="6R86">
    <property type="method" value="EM"/>
    <property type="resolution" value="3.40 A"/>
    <property type="chains" value="F=2-387"/>
</dbReference>
<dbReference type="PDB" id="6R87">
    <property type="method" value="EM"/>
    <property type="resolution" value="3.40 A"/>
    <property type="chains" value="F=2-387"/>
</dbReference>
<dbReference type="PDB" id="6RI5">
    <property type="method" value="EM"/>
    <property type="resolution" value="3.30 A"/>
    <property type="chains" value="C=1-387"/>
</dbReference>
<dbReference type="PDB" id="6RZZ">
    <property type="method" value="EM"/>
    <property type="resolution" value="3.20 A"/>
    <property type="chains" value="C=1-387"/>
</dbReference>
<dbReference type="PDB" id="6S05">
    <property type="method" value="EM"/>
    <property type="resolution" value="3.90 A"/>
    <property type="chains" value="C=1-387"/>
</dbReference>
<dbReference type="PDB" id="6S47">
    <property type="method" value="EM"/>
    <property type="resolution" value="3.28 A"/>
    <property type="chains" value="AE=2-387"/>
</dbReference>
<dbReference type="PDB" id="6SNT">
    <property type="method" value="EM"/>
    <property type="resolution" value="2.80 A"/>
    <property type="chains" value="i=1-387"/>
</dbReference>
<dbReference type="PDB" id="6SV4">
    <property type="method" value="EM"/>
    <property type="resolution" value="3.30 A"/>
    <property type="chains" value="BA/YA/ZA=1-387"/>
</dbReference>
<dbReference type="PDB" id="6T4Q">
    <property type="method" value="EM"/>
    <property type="resolution" value="2.60 A"/>
    <property type="chains" value="LB=2-387"/>
</dbReference>
<dbReference type="PDB" id="6T7I">
    <property type="method" value="EM"/>
    <property type="resolution" value="3.20 A"/>
    <property type="chains" value="LB=1-387"/>
</dbReference>
<dbReference type="PDB" id="6T7T">
    <property type="method" value="EM"/>
    <property type="resolution" value="3.10 A"/>
    <property type="chains" value="LB=1-387"/>
</dbReference>
<dbReference type="PDB" id="6T83">
    <property type="method" value="EM"/>
    <property type="resolution" value="4.00 A"/>
    <property type="chains" value="By/Ea=1-387"/>
</dbReference>
<dbReference type="PDB" id="6TB3">
    <property type="method" value="EM"/>
    <property type="resolution" value="2.80 A"/>
    <property type="chains" value="BA=2-387"/>
</dbReference>
<dbReference type="PDB" id="6TNU">
    <property type="method" value="EM"/>
    <property type="resolution" value="3.10 A"/>
    <property type="chains" value="BA=2-387"/>
</dbReference>
<dbReference type="PDB" id="6WOO">
    <property type="method" value="EM"/>
    <property type="resolution" value="2.90 A"/>
    <property type="chains" value="B=2-385"/>
</dbReference>
<dbReference type="PDB" id="6YLG">
    <property type="method" value="EM"/>
    <property type="resolution" value="3.00 A"/>
    <property type="chains" value="B=1-387"/>
</dbReference>
<dbReference type="PDB" id="6YLH">
    <property type="method" value="EM"/>
    <property type="resolution" value="3.10 A"/>
    <property type="chains" value="B=1-387"/>
</dbReference>
<dbReference type="PDB" id="6YLX">
    <property type="method" value="EM"/>
    <property type="resolution" value="3.90 A"/>
    <property type="chains" value="B=1-387"/>
</dbReference>
<dbReference type="PDB" id="6YLY">
    <property type="method" value="EM"/>
    <property type="resolution" value="3.80 A"/>
    <property type="chains" value="B=1-387"/>
</dbReference>
<dbReference type="PDB" id="6Z6J">
    <property type="method" value="EM"/>
    <property type="resolution" value="3.40 A"/>
    <property type="chains" value="LB=1-387"/>
</dbReference>
<dbReference type="PDB" id="6Z6K">
    <property type="method" value="EM"/>
    <property type="resolution" value="3.40 A"/>
    <property type="chains" value="LB=1-387"/>
</dbReference>
<dbReference type="PDB" id="7AZY">
    <property type="method" value="EM"/>
    <property type="resolution" value="2.88 A"/>
    <property type="chains" value="l=1-387"/>
</dbReference>
<dbReference type="PDB" id="7B7D">
    <property type="method" value="EM"/>
    <property type="resolution" value="3.30 A"/>
    <property type="chains" value="LE=2-387"/>
</dbReference>
<dbReference type="PDB" id="7BT6">
    <property type="method" value="EM"/>
    <property type="resolution" value="3.12 A"/>
    <property type="chains" value="B=1-387"/>
</dbReference>
<dbReference type="PDB" id="7BTB">
    <property type="method" value="EM"/>
    <property type="resolution" value="3.22 A"/>
    <property type="chains" value="B=1-387"/>
</dbReference>
<dbReference type="PDB" id="7MPI">
    <property type="method" value="EM"/>
    <property type="resolution" value="3.05 A"/>
    <property type="chains" value="AB=2-387"/>
</dbReference>
<dbReference type="PDB" id="7MPJ">
    <property type="method" value="EM"/>
    <property type="resolution" value="2.70 A"/>
    <property type="chains" value="AB=2-387"/>
</dbReference>
<dbReference type="PDB" id="7N8B">
    <property type="method" value="EM"/>
    <property type="resolution" value="3.05 A"/>
    <property type="chains" value="AB=2-387"/>
</dbReference>
<dbReference type="PDB" id="7NAC">
    <property type="method" value="EM"/>
    <property type="resolution" value="3.04 A"/>
    <property type="chains" value="B=1-387"/>
</dbReference>
<dbReference type="PDB" id="7NAD">
    <property type="method" value="EM"/>
    <property type="resolution" value="3.04 A"/>
    <property type="chains" value="B=1-387"/>
</dbReference>
<dbReference type="PDB" id="7NAF">
    <property type="method" value="EM"/>
    <property type="resolution" value="3.13 A"/>
    <property type="chains" value="B=12-387"/>
</dbReference>
<dbReference type="PDB" id="7NRC">
    <property type="method" value="EM"/>
    <property type="resolution" value="3.90 A"/>
    <property type="chains" value="LE=2-387"/>
</dbReference>
<dbReference type="PDB" id="7NRD">
    <property type="method" value="EM"/>
    <property type="resolution" value="4.36 A"/>
    <property type="chains" value="LE=2-387"/>
</dbReference>
<dbReference type="PDB" id="7OF1">
    <property type="method" value="EM"/>
    <property type="resolution" value="3.10 A"/>
    <property type="chains" value="B=1-387"/>
</dbReference>
<dbReference type="PDB" id="7OH3">
    <property type="method" value="EM"/>
    <property type="resolution" value="3.40 A"/>
    <property type="chains" value="B=1-387"/>
</dbReference>
<dbReference type="PDB" id="7OHP">
    <property type="method" value="EM"/>
    <property type="resolution" value="3.90 A"/>
    <property type="chains" value="B=1-387"/>
</dbReference>
<dbReference type="PDB" id="7OHQ">
    <property type="method" value="EM"/>
    <property type="resolution" value="3.10 A"/>
    <property type="chains" value="B=1-387"/>
</dbReference>
<dbReference type="PDB" id="7OHR">
    <property type="method" value="EM"/>
    <property type="resolution" value="4.72 A"/>
    <property type="chains" value="B=1-387"/>
</dbReference>
<dbReference type="PDB" id="7OHS">
    <property type="method" value="EM"/>
    <property type="resolution" value="4.38 A"/>
    <property type="chains" value="B=1-387"/>
</dbReference>
<dbReference type="PDB" id="7OHT">
    <property type="method" value="EM"/>
    <property type="resolution" value="4.70 A"/>
    <property type="chains" value="B=1-387"/>
</dbReference>
<dbReference type="PDB" id="7OHU">
    <property type="method" value="EM"/>
    <property type="resolution" value="3.70 A"/>
    <property type="chains" value="B=1-387"/>
</dbReference>
<dbReference type="PDB" id="7OHV">
    <property type="method" value="EM"/>
    <property type="resolution" value="3.90 A"/>
    <property type="chains" value="B=1-387"/>
</dbReference>
<dbReference type="PDB" id="7OHW">
    <property type="method" value="EM"/>
    <property type="resolution" value="3.50 A"/>
    <property type="chains" value="B=1-387"/>
</dbReference>
<dbReference type="PDB" id="7OHX">
    <property type="method" value="EM"/>
    <property type="resolution" value="3.30 A"/>
    <property type="chains" value="B=1-387"/>
</dbReference>
<dbReference type="PDB" id="7OHY">
    <property type="method" value="EM"/>
    <property type="resolution" value="3.90 A"/>
    <property type="chains" value="B=1-387"/>
</dbReference>
<dbReference type="PDB" id="7R72">
    <property type="method" value="EM"/>
    <property type="resolution" value="3.07 A"/>
    <property type="chains" value="B=1-387"/>
</dbReference>
<dbReference type="PDB" id="7R7A">
    <property type="method" value="EM"/>
    <property type="resolution" value="3.04 A"/>
    <property type="chains" value="B=1-387"/>
</dbReference>
<dbReference type="PDB" id="7U0H">
    <property type="method" value="EM"/>
    <property type="resolution" value="2.76 A"/>
    <property type="chains" value="B=1-387"/>
</dbReference>
<dbReference type="PDB" id="7UG6">
    <property type="method" value="EM"/>
    <property type="resolution" value="2.90 A"/>
    <property type="chains" value="B=1-387"/>
</dbReference>
<dbReference type="PDB" id="7UOO">
    <property type="method" value="EM"/>
    <property type="resolution" value="2.34 A"/>
    <property type="chains" value="B=1-387"/>
</dbReference>
<dbReference type="PDB" id="7UQB">
    <property type="method" value="EM"/>
    <property type="resolution" value="2.43 A"/>
    <property type="chains" value="B=1-387"/>
</dbReference>
<dbReference type="PDB" id="7UQZ">
    <property type="method" value="EM"/>
    <property type="resolution" value="2.44 A"/>
    <property type="chains" value="B=2-387"/>
</dbReference>
<dbReference type="PDB" id="7V08">
    <property type="method" value="EM"/>
    <property type="resolution" value="2.36 A"/>
    <property type="chains" value="B=1-387"/>
</dbReference>
<dbReference type="PDB" id="7Z34">
    <property type="method" value="EM"/>
    <property type="resolution" value="3.80 A"/>
    <property type="chains" value="B=1-387"/>
</dbReference>
<dbReference type="PDB" id="7ZPQ">
    <property type="method" value="EM"/>
    <property type="resolution" value="3.47 A"/>
    <property type="chains" value="BB=2-387"/>
</dbReference>
<dbReference type="PDB" id="7ZRS">
    <property type="method" value="EM"/>
    <property type="resolution" value="4.80 A"/>
    <property type="chains" value="BB=2-387"/>
</dbReference>
<dbReference type="PDB" id="7ZS5">
    <property type="method" value="EM"/>
    <property type="resolution" value="3.20 A"/>
    <property type="chains" value="BD=2-387"/>
</dbReference>
<dbReference type="PDB" id="7ZUW">
    <property type="method" value="EM"/>
    <property type="resolution" value="4.30 A"/>
    <property type="chains" value="BB=2-387"/>
</dbReference>
<dbReference type="PDB" id="7ZUX">
    <property type="method" value="EM"/>
    <property type="resolution" value="2.50 A"/>
    <property type="chains" value="EB=2-387"/>
</dbReference>
<dbReference type="PDB" id="7ZW0">
    <property type="method" value="EM"/>
    <property type="resolution" value="2.40 A"/>
    <property type="chains" value="LF=1-387"/>
</dbReference>
<dbReference type="PDB" id="8AAF">
    <property type="method" value="EM"/>
    <property type="resolution" value="2.50 A"/>
    <property type="chains" value="k=1-387"/>
</dbReference>
<dbReference type="PDB" id="8AGT">
    <property type="method" value="EM"/>
    <property type="resolution" value="2.60 A"/>
    <property type="chains" value="k=1-387"/>
</dbReference>
<dbReference type="PDB" id="8AGU">
    <property type="method" value="EM"/>
    <property type="resolution" value="2.70 A"/>
    <property type="chains" value="k=1-387"/>
</dbReference>
<dbReference type="PDB" id="8AGV">
    <property type="method" value="EM"/>
    <property type="resolution" value="2.60 A"/>
    <property type="chains" value="k=1-387"/>
</dbReference>
<dbReference type="PDB" id="8AGW">
    <property type="method" value="EM"/>
    <property type="resolution" value="2.60 A"/>
    <property type="chains" value="k=1-387"/>
</dbReference>
<dbReference type="PDB" id="8AGX">
    <property type="method" value="EM"/>
    <property type="resolution" value="2.40 A"/>
    <property type="chains" value="k=1-387"/>
</dbReference>
<dbReference type="PDB" id="8AGZ">
    <property type="method" value="EM"/>
    <property type="resolution" value="2.60 A"/>
    <property type="chains" value="k=1-387"/>
</dbReference>
<dbReference type="PDB" id="8BIP">
    <property type="method" value="EM"/>
    <property type="resolution" value="3.10 A"/>
    <property type="chains" value="LB=2-387"/>
</dbReference>
<dbReference type="PDB" id="8BJQ">
    <property type="method" value="EM"/>
    <property type="resolution" value="3.80 A"/>
    <property type="chains" value="LB=2-387"/>
</dbReference>
<dbReference type="PDB" id="8BN3">
    <property type="method" value="EM"/>
    <property type="resolution" value="2.40 A"/>
    <property type="chains" value="L3=2-387"/>
</dbReference>
<dbReference type="PDB" id="8BQD">
    <property type="method" value="EM"/>
    <property type="resolution" value="3.90 A"/>
    <property type="chains" value="BA=2-387"/>
</dbReference>
<dbReference type="PDB" id="8BQX">
    <property type="method" value="EM"/>
    <property type="resolution" value="3.80 A"/>
    <property type="chains" value="BA=2-387"/>
</dbReference>
<dbReference type="PDB" id="8CCS">
    <property type="method" value="EM"/>
    <property type="resolution" value="1.97 A"/>
    <property type="chains" value="FF=1-387"/>
</dbReference>
<dbReference type="PDB" id="8CDL">
    <property type="method" value="EM"/>
    <property type="resolution" value="2.72 A"/>
    <property type="chains" value="FF=1-387"/>
</dbReference>
<dbReference type="PDB" id="8CDR">
    <property type="method" value="EM"/>
    <property type="resolution" value="2.04 A"/>
    <property type="chains" value="FF=1-387"/>
</dbReference>
<dbReference type="PDB" id="8CEH">
    <property type="method" value="EM"/>
    <property type="resolution" value="2.05 A"/>
    <property type="chains" value="FF=1-387"/>
</dbReference>
<dbReference type="PDB" id="8CF5">
    <property type="method" value="EM"/>
    <property type="resolution" value="2.71 A"/>
    <property type="chains" value="FF=1-387"/>
</dbReference>
<dbReference type="PDB" id="8CG8">
    <property type="method" value="EM"/>
    <property type="resolution" value="2.57 A"/>
    <property type="chains" value="FF=1-387"/>
</dbReference>
<dbReference type="PDB" id="8CGN">
    <property type="method" value="EM"/>
    <property type="resolution" value="2.28 A"/>
    <property type="chains" value="FF=1-387"/>
</dbReference>
<dbReference type="PDB" id="8CIV">
    <property type="method" value="EM"/>
    <property type="resolution" value="2.47 A"/>
    <property type="chains" value="FF=1-387"/>
</dbReference>
<dbReference type="PDB" id="8CKU">
    <property type="method" value="EM"/>
    <property type="resolution" value="3.11 A"/>
    <property type="chains" value="FF=1-387"/>
</dbReference>
<dbReference type="PDB" id="8CMJ">
    <property type="method" value="EM"/>
    <property type="resolution" value="3.79 A"/>
    <property type="chains" value="FF=1-387"/>
</dbReference>
<dbReference type="PDB" id="8EUB">
    <property type="method" value="EM"/>
    <property type="resolution" value="2.52 A"/>
    <property type="chains" value="AB=1-387"/>
</dbReference>
<dbReference type="PDB" id="8EVP">
    <property type="method" value="EM"/>
    <property type="resolution" value="2.38 A"/>
    <property type="chains" value="AB=1-387"/>
</dbReference>
<dbReference type="PDB" id="8EVQ">
    <property type="method" value="EM"/>
    <property type="resolution" value="2.72 A"/>
    <property type="chains" value="AB=1-387"/>
</dbReference>
<dbReference type="PDB" id="8EVR">
    <property type="method" value="EM"/>
    <property type="resolution" value="2.87 A"/>
    <property type="chains" value="AB=1-387"/>
</dbReference>
<dbReference type="PDB" id="8EVS">
    <property type="method" value="EM"/>
    <property type="resolution" value="2.62 A"/>
    <property type="chains" value="AB=1-387"/>
</dbReference>
<dbReference type="PDB" id="8EVT">
    <property type="method" value="EM"/>
    <property type="resolution" value="2.20 A"/>
    <property type="chains" value="AB=1-387"/>
</dbReference>
<dbReference type="PDB" id="8EWB">
    <property type="method" value="EM"/>
    <property type="resolution" value="2.87 A"/>
    <property type="chains" value="AB=1-387"/>
</dbReference>
<dbReference type="PDB" id="8EWC">
    <property type="method" value="EM"/>
    <property type="resolution" value="2.45 A"/>
    <property type="chains" value="AB=1-387"/>
</dbReference>
<dbReference type="PDB" id="8HFR">
    <property type="method" value="EM"/>
    <property type="resolution" value="2.64 A"/>
    <property type="chains" value="CD=1-387"/>
</dbReference>
<dbReference type="PDB" id="8K2D">
    <property type="method" value="EM"/>
    <property type="resolution" value="3.20 A"/>
    <property type="chains" value="LB=1-387"/>
</dbReference>
<dbReference type="PDB" id="8K82">
    <property type="method" value="EM"/>
    <property type="resolution" value="3.00 A"/>
    <property type="chains" value="LB=1-387"/>
</dbReference>
<dbReference type="PDB" id="8P4V">
    <property type="method" value="X-ray"/>
    <property type="resolution" value="3.16 A"/>
    <property type="chains" value="CE/k=1-387"/>
</dbReference>
<dbReference type="PDB" id="8P8M">
    <property type="method" value="EM"/>
    <property type="resolution" value="2.66 A"/>
    <property type="chains" value="LG=1-387"/>
</dbReference>
<dbReference type="PDB" id="8P8N">
    <property type="method" value="EM"/>
    <property type="resolution" value="2.15 A"/>
    <property type="chains" value="LG=1-387"/>
</dbReference>
<dbReference type="PDB" id="8P8U">
    <property type="method" value="EM"/>
    <property type="resolution" value="2.23 A"/>
    <property type="chains" value="LG=1-387"/>
</dbReference>
<dbReference type="PDB" id="8P9A">
    <property type="method" value="X-ray"/>
    <property type="resolution" value="2.90 A"/>
    <property type="chains" value="CE/k=1-387"/>
</dbReference>
<dbReference type="PDB" id="8PFR">
    <property type="method" value="EM"/>
    <property type="resolution" value="2.15 A"/>
    <property type="chains" value="LG=1-387"/>
</dbReference>
<dbReference type="PDB" id="8T2X">
    <property type="method" value="EM"/>
    <property type="resolution" value="2.46 A"/>
    <property type="chains" value="AB=1-387"/>
</dbReference>
<dbReference type="PDB" id="8T2Y">
    <property type="method" value="EM"/>
    <property type="resolution" value="2.20 A"/>
    <property type="chains" value="AB=1-387"/>
</dbReference>
<dbReference type="PDB" id="8T2Z">
    <property type="method" value="EM"/>
    <property type="resolution" value="2.40 A"/>
    <property type="chains" value="AB=1-387"/>
</dbReference>
<dbReference type="PDB" id="8T30">
    <property type="method" value="EM"/>
    <property type="resolution" value="2.88 A"/>
    <property type="chains" value="AB=1-387"/>
</dbReference>
<dbReference type="PDB" id="8T3A">
    <property type="method" value="EM"/>
    <property type="resolution" value="2.86 A"/>
    <property type="chains" value="AB=1-387"/>
</dbReference>
<dbReference type="PDB" id="8T3B">
    <property type="method" value="EM"/>
    <property type="resolution" value="3.08 A"/>
    <property type="chains" value="AB=1-387"/>
</dbReference>
<dbReference type="PDB" id="8T3C">
    <property type="method" value="EM"/>
    <property type="resolution" value="3.86 A"/>
    <property type="chains" value="AB=1-387"/>
</dbReference>
<dbReference type="PDB" id="8T3D">
    <property type="method" value="EM"/>
    <property type="resolution" value="2.95 A"/>
    <property type="chains" value="AB=1-387"/>
</dbReference>
<dbReference type="PDB" id="8T3E">
    <property type="method" value="EM"/>
    <property type="resolution" value="3.04 A"/>
    <property type="chains" value="AB=1-387"/>
</dbReference>
<dbReference type="PDB" id="8T3F">
    <property type="method" value="EM"/>
    <property type="resolution" value="3.09 A"/>
    <property type="chains" value="AB=1-387"/>
</dbReference>
<dbReference type="PDB" id="8UT0">
    <property type="method" value="EM"/>
    <property type="resolution" value="3.22 A"/>
    <property type="chains" value="LE=2-387"/>
</dbReference>
<dbReference type="PDB" id="8UTI">
    <property type="method" value="EM"/>
    <property type="resolution" value="3.13 A"/>
    <property type="chains" value="LE=2-387"/>
</dbReference>
<dbReference type="PDB" id="8V83">
    <property type="method" value="EM"/>
    <property type="resolution" value="2.53 A"/>
    <property type="chains" value="B=1-387"/>
</dbReference>
<dbReference type="PDB" id="8V84">
    <property type="method" value="EM"/>
    <property type="resolution" value="2.70 A"/>
    <property type="chains" value="B=1-387"/>
</dbReference>
<dbReference type="PDB" id="8V87">
    <property type="method" value="EM"/>
    <property type="resolution" value="2.66 A"/>
    <property type="chains" value="B=1-387"/>
</dbReference>
<dbReference type="PDB" id="8XU8">
    <property type="method" value="EM"/>
    <property type="resolution" value="3.40 A"/>
    <property type="chains" value="E=2-387"/>
</dbReference>
<dbReference type="PDB" id="8Y0U">
    <property type="method" value="EM"/>
    <property type="resolution" value="3.59 A"/>
    <property type="chains" value="LB=1-387"/>
</dbReference>
<dbReference type="PDB" id="8YLD">
    <property type="method" value="EM"/>
    <property type="resolution" value="3.90 A"/>
    <property type="chains" value="E=2-387"/>
</dbReference>
<dbReference type="PDB" id="8YLR">
    <property type="method" value="EM"/>
    <property type="resolution" value="3.90 A"/>
    <property type="chains" value="E=2-387"/>
</dbReference>
<dbReference type="PDB" id="8Z70">
    <property type="method" value="EM"/>
    <property type="resolution" value="3.20 A"/>
    <property type="chains" value="E=2-387"/>
</dbReference>
<dbReference type="PDB" id="8Z71">
    <property type="method" value="EM"/>
    <property type="resolution" value="3.60 A"/>
    <property type="chains" value="E=2-387"/>
</dbReference>
<dbReference type="PDB" id="9F9S">
    <property type="method" value="EM"/>
    <property type="resolution" value="2.90 A"/>
    <property type="chains" value="Lx/Mx=1-387"/>
</dbReference>
<dbReference type="PDBsum" id="3J6X"/>
<dbReference type="PDBsum" id="3J6Y"/>
<dbReference type="PDBsum" id="3J77"/>
<dbReference type="PDBsum" id="3J78"/>
<dbReference type="PDBsum" id="3JCT"/>
<dbReference type="PDBsum" id="4U3M"/>
<dbReference type="PDBsum" id="4U3N"/>
<dbReference type="PDBsum" id="4U3U"/>
<dbReference type="PDBsum" id="4U4N"/>
<dbReference type="PDBsum" id="4U4O"/>
<dbReference type="PDBsum" id="4U4Q"/>
<dbReference type="PDBsum" id="4U4R"/>
<dbReference type="PDBsum" id="4U4U"/>
<dbReference type="PDBsum" id="4U4Y"/>
<dbReference type="PDBsum" id="4U4Z"/>
<dbReference type="PDBsum" id="4U50"/>
<dbReference type="PDBsum" id="4U51"/>
<dbReference type="PDBsum" id="4U52"/>
<dbReference type="PDBsum" id="4U53"/>
<dbReference type="PDBsum" id="4U55"/>
<dbReference type="PDBsum" id="4U56"/>
<dbReference type="PDBsum" id="4U6F"/>
<dbReference type="PDBsum" id="4V4B"/>
<dbReference type="PDBsum" id="4V5Z"/>
<dbReference type="PDBsum" id="4V6I"/>
<dbReference type="PDBsum" id="4V7F"/>
<dbReference type="PDBsum" id="4V7R"/>
<dbReference type="PDBsum" id="4V88"/>
<dbReference type="PDBsum" id="4V8T"/>
<dbReference type="PDBsum" id="4V8Y"/>
<dbReference type="PDBsum" id="4V8Z"/>
<dbReference type="PDBsum" id="4V91"/>
<dbReference type="PDBsum" id="5APN"/>
<dbReference type="PDBsum" id="5APO"/>
<dbReference type="PDBsum" id="5DAT"/>
<dbReference type="PDBsum" id="5DC3"/>
<dbReference type="PDBsum" id="5DGE"/>
<dbReference type="PDBsum" id="5DGF"/>
<dbReference type="PDBsum" id="5DGV"/>
<dbReference type="PDBsum" id="5FCI"/>
<dbReference type="PDBsum" id="5FCJ"/>
<dbReference type="PDBsum" id="5GAK"/>
<dbReference type="PDBsum" id="5H4P"/>
<dbReference type="PDBsum" id="5I4L"/>
<dbReference type="PDBsum" id="5JCS"/>
<dbReference type="PDBsum" id="5JUO"/>
<dbReference type="PDBsum" id="5JUP"/>
<dbReference type="PDBsum" id="5JUS"/>
<dbReference type="PDBsum" id="5JUT"/>
<dbReference type="PDBsum" id="5JUU"/>
<dbReference type="PDBsum" id="5LYB"/>
<dbReference type="PDBsum" id="5M1J"/>
<dbReference type="PDBsum" id="5MC6"/>
<dbReference type="PDBsum" id="5MEI"/>
<dbReference type="PDBsum" id="5NDG"/>
<dbReference type="PDBsum" id="5NDV"/>
<dbReference type="PDBsum" id="5NDW"/>
<dbReference type="PDBsum" id="5OBM"/>
<dbReference type="PDBsum" id="5ON6"/>
<dbReference type="PDBsum" id="5T62"/>
<dbReference type="PDBsum" id="5T6R"/>
<dbReference type="PDBsum" id="5TBW"/>
<dbReference type="PDBsum" id="5TGA"/>
<dbReference type="PDBsum" id="5TGM"/>
<dbReference type="PDBsum" id="5Z3G"/>
<dbReference type="PDBsum" id="6C0F"/>
<dbReference type="PDBsum" id="6ELZ"/>
<dbReference type="PDBsum" id="6EM1"/>
<dbReference type="PDBsum" id="6EM4"/>
<dbReference type="PDBsum" id="6EM5"/>
<dbReference type="PDBsum" id="6FT6"/>
<dbReference type="PDBsum" id="6GQ1"/>
<dbReference type="PDBsum" id="6GQB"/>
<dbReference type="PDBsum" id="6GQV"/>
<dbReference type="PDBsum" id="6HD7"/>
<dbReference type="PDBsum" id="6HHQ"/>
<dbReference type="PDBsum" id="6I7O"/>
<dbReference type="PDBsum" id="6M62"/>
<dbReference type="PDBsum" id="6N8J"/>
<dbReference type="PDBsum" id="6N8K"/>
<dbReference type="PDBsum" id="6N8L"/>
<dbReference type="PDBsum" id="6N8M"/>
<dbReference type="PDBsum" id="6N8N"/>
<dbReference type="PDBsum" id="6N8O"/>
<dbReference type="PDBsum" id="6OIG"/>
<dbReference type="PDBsum" id="6Q8Y"/>
<dbReference type="PDBsum" id="6QIK"/>
<dbReference type="PDBsum" id="6QT0"/>
<dbReference type="PDBsum" id="6QTZ"/>
<dbReference type="PDBsum" id="6R84"/>
<dbReference type="PDBsum" id="6R86"/>
<dbReference type="PDBsum" id="6R87"/>
<dbReference type="PDBsum" id="6RI5"/>
<dbReference type="PDBsum" id="6RZZ"/>
<dbReference type="PDBsum" id="6S05"/>
<dbReference type="PDBsum" id="6S47"/>
<dbReference type="PDBsum" id="6SNT"/>
<dbReference type="PDBsum" id="6SV4"/>
<dbReference type="PDBsum" id="6T4Q"/>
<dbReference type="PDBsum" id="6T7I"/>
<dbReference type="PDBsum" id="6T7T"/>
<dbReference type="PDBsum" id="6T83"/>
<dbReference type="PDBsum" id="6TB3"/>
<dbReference type="PDBsum" id="6TNU"/>
<dbReference type="PDBsum" id="6WOO"/>
<dbReference type="PDBsum" id="6YLG"/>
<dbReference type="PDBsum" id="6YLH"/>
<dbReference type="PDBsum" id="6YLX"/>
<dbReference type="PDBsum" id="6YLY"/>
<dbReference type="PDBsum" id="6Z6J"/>
<dbReference type="PDBsum" id="6Z6K"/>
<dbReference type="PDBsum" id="7AZY"/>
<dbReference type="PDBsum" id="7B7D"/>
<dbReference type="PDBsum" id="7BT6"/>
<dbReference type="PDBsum" id="7BTB"/>
<dbReference type="PDBsum" id="7MPI"/>
<dbReference type="PDBsum" id="7MPJ"/>
<dbReference type="PDBsum" id="7N8B"/>
<dbReference type="PDBsum" id="7NAC"/>
<dbReference type="PDBsum" id="7NAD"/>
<dbReference type="PDBsum" id="7NAF"/>
<dbReference type="PDBsum" id="7NRC"/>
<dbReference type="PDBsum" id="7NRD"/>
<dbReference type="PDBsum" id="7OF1"/>
<dbReference type="PDBsum" id="7OH3"/>
<dbReference type="PDBsum" id="7OHP"/>
<dbReference type="PDBsum" id="7OHQ"/>
<dbReference type="PDBsum" id="7OHR"/>
<dbReference type="PDBsum" id="7OHS"/>
<dbReference type="PDBsum" id="7OHT"/>
<dbReference type="PDBsum" id="7OHU"/>
<dbReference type="PDBsum" id="7OHV"/>
<dbReference type="PDBsum" id="7OHW"/>
<dbReference type="PDBsum" id="7OHX"/>
<dbReference type="PDBsum" id="7OHY"/>
<dbReference type="PDBsum" id="7R72"/>
<dbReference type="PDBsum" id="7R7A"/>
<dbReference type="PDBsum" id="7U0H"/>
<dbReference type="PDBsum" id="7UG6"/>
<dbReference type="PDBsum" id="7UOO"/>
<dbReference type="PDBsum" id="7UQB"/>
<dbReference type="PDBsum" id="7UQZ"/>
<dbReference type="PDBsum" id="7V08"/>
<dbReference type="PDBsum" id="7Z34"/>
<dbReference type="PDBsum" id="7ZPQ"/>
<dbReference type="PDBsum" id="7ZRS"/>
<dbReference type="PDBsum" id="7ZS5"/>
<dbReference type="PDBsum" id="7ZUW"/>
<dbReference type="PDBsum" id="7ZUX"/>
<dbReference type="PDBsum" id="7ZW0"/>
<dbReference type="PDBsum" id="8AAF"/>
<dbReference type="PDBsum" id="8AGT"/>
<dbReference type="PDBsum" id="8AGU"/>
<dbReference type="PDBsum" id="8AGV"/>
<dbReference type="PDBsum" id="8AGW"/>
<dbReference type="PDBsum" id="8AGX"/>
<dbReference type="PDBsum" id="8AGZ"/>
<dbReference type="PDBsum" id="8BIP"/>
<dbReference type="PDBsum" id="8BJQ"/>
<dbReference type="PDBsum" id="8BN3"/>
<dbReference type="PDBsum" id="8BQD"/>
<dbReference type="PDBsum" id="8BQX"/>
<dbReference type="PDBsum" id="8CCS"/>
<dbReference type="PDBsum" id="8CDL"/>
<dbReference type="PDBsum" id="8CDR"/>
<dbReference type="PDBsum" id="8CEH"/>
<dbReference type="PDBsum" id="8CF5"/>
<dbReference type="PDBsum" id="8CG8"/>
<dbReference type="PDBsum" id="8CGN"/>
<dbReference type="PDBsum" id="8CIV"/>
<dbReference type="PDBsum" id="8CKU"/>
<dbReference type="PDBsum" id="8CMJ"/>
<dbReference type="PDBsum" id="8EUB"/>
<dbReference type="PDBsum" id="8EVP"/>
<dbReference type="PDBsum" id="8EVQ"/>
<dbReference type="PDBsum" id="8EVR"/>
<dbReference type="PDBsum" id="8EVS"/>
<dbReference type="PDBsum" id="8EVT"/>
<dbReference type="PDBsum" id="8EWB"/>
<dbReference type="PDBsum" id="8EWC"/>
<dbReference type="PDBsum" id="8HFR"/>
<dbReference type="PDBsum" id="8K2D"/>
<dbReference type="PDBsum" id="8K82"/>
<dbReference type="PDBsum" id="8P4V"/>
<dbReference type="PDBsum" id="8P8M"/>
<dbReference type="PDBsum" id="8P8N"/>
<dbReference type="PDBsum" id="8P8U"/>
<dbReference type="PDBsum" id="8P9A"/>
<dbReference type="PDBsum" id="8PFR"/>
<dbReference type="PDBsum" id="8T2X"/>
<dbReference type="PDBsum" id="8T2Y"/>
<dbReference type="PDBsum" id="8T2Z"/>
<dbReference type="PDBsum" id="8T30"/>
<dbReference type="PDBsum" id="8T3A"/>
<dbReference type="PDBsum" id="8T3B"/>
<dbReference type="PDBsum" id="8T3C"/>
<dbReference type="PDBsum" id="8T3D"/>
<dbReference type="PDBsum" id="8T3E"/>
<dbReference type="PDBsum" id="8T3F"/>
<dbReference type="PDBsum" id="8UT0"/>
<dbReference type="PDBsum" id="8UTI"/>
<dbReference type="PDBsum" id="8V83"/>
<dbReference type="PDBsum" id="8V84"/>
<dbReference type="PDBsum" id="8V87"/>
<dbReference type="PDBsum" id="8XU8"/>
<dbReference type="PDBsum" id="8Y0U"/>
<dbReference type="PDBsum" id="8YLD"/>
<dbReference type="PDBsum" id="8YLR"/>
<dbReference type="PDBsum" id="8Z70"/>
<dbReference type="PDBsum" id="8Z71"/>
<dbReference type="PDBsum" id="9F9S"/>
<dbReference type="EMDB" id="EMD-0047"/>
<dbReference type="EMDB" id="EMD-0048"/>
<dbReference type="EMDB" id="EMD-0049"/>
<dbReference type="EMDB" id="EMD-0202"/>
<dbReference type="EMDB" id="EMD-0369"/>
<dbReference type="EMDB" id="EMD-0370"/>
<dbReference type="EMDB" id="EMD-0371"/>
<dbReference type="EMDB" id="EMD-0372"/>
<dbReference type="EMDB" id="EMD-0373"/>
<dbReference type="EMDB" id="EMD-0374"/>
<dbReference type="EMDB" id="EMD-10068"/>
<dbReference type="EMDB" id="EMD-10071"/>
<dbReference type="EMDB" id="EMD-10098"/>
<dbReference type="EMDB" id="EMD-10262"/>
<dbReference type="EMDB" id="EMD-10315"/>
<dbReference type="EMDB" id="EMD-10377"/>
<dbReference type="EMDB" id="EMD-10396"/>
<dbReference type="EMDB" id="EMD-10397"/>
<dbReference type="EMDB" id="EMD-10398"/>
<dbReference type="EMDB" id="EMD-10431"/>
<dbReference type="EMDB" id="EMD-10537"/>
<dbReference type="EMDB" id="EMD-10838"/>
<dbReference type="EMDB" id="EMD-10839"/>
<dbReference type="EMDB" id="EMD-10841"/>
<dbReference type="EMDB" id="EMD-10842"/>
<dbReference type="EMDB" id="EMD-11096"/>
<dbReference type="EMDB" id="EMD-11097"/>
<dbReference type="EMDB" id="EMD-11951"/>
<dbReference type="EMDB" id="EMD-12081"/>
<dbReference type="EMDB" id="EMD-12534"/>
<dbReference type="EMDB" id="EMD-12535"/>
<dbReference type="EMDB" id="EMD-12866"/>
<dbReference type="EMDB" id="EMD-12892"/>
<dbReference type="EMDB" id="EMD-12904"/>
<dbReference type="EMDB" id="EMD-12905"/>
<dbReference type="EMDB" id="EMD-12906"/>
<dbReference type="EMDB" id="EMD-12907"/>
<dbReference type="EMDB" id="EMD-12908"/>
<dbReference type="EMDB" id="EMD-12909"/>
<dbReference type="EMDB" id="EMD-12910"/>
<dbReference type="EMDB" id="EMD-12911"/>
<dbReference type="EMDB" id="EMD-12912"/>
<dbReference type="EMDB" id="EMD-12913"/>
<dbReference type="EMDB" id="EMD-14471"/>
<dbReference type="EMDB" id="EMD-14926"/>
<dbReference type="EMDB" id="EMD-14979"/>
<dbReference type="EMDB" id="EMD-14990"/>
<dbReference type="EMDB" id="EMD-15423"/>
<dbReference type="EMDB" id="EMD-15427"/>
<dbReference type="EMDB" id="EMD-16086"/>
<dbReference type="EMDB" id="EMD-16090"/>
<dbReference type="EMDB" id="EMD-16191"/>
<dbReference type="EMDB" id="EMD-16563"/>
<dbReference type="EMDB" id="EMD-16591"/>
<dbReference type="EMDB" id="EMD-16594"/>
<dbReference type="EMDB" id="EMD-16609"/>
<dbReference type="EMDB" id="EMD-16616"/>
<dbReference type="EMDB" id="EMD-16634"/>
<dbReference type="EMDB" id="EMD-16648"/>
<dbReference type="EMDB" id="EMD-16684"/>
<dbReference type="EMDB" id="EMD-16702"/>
<dbReference type="EMDB" id="EMD-16729"/>
<dbReference type="EMDB" id="EMD-17549"/>
<dbReference type="EMDB" id="EMD-17550"/>
<dbReference type="EMDB" id="EMD-17552"/>
<dbReference type="EMDB" id="EMD-17653"/>
<dbReference type="EMDB" id="EMD-20077"/>
<dbReference type="EMDB" id="EMD-21859"/>
<dbReference type="EMDB" id="EMD-23934"/>
<dbReference type="EMDB" id="EMD-23935"/>
<dbReference type="EMDB" id="EMD-24235"/>
<dbReference type="EMDB" id="EMD-24269"/>
<dbReference type="EMDB" id="EMD-24270"/>
<dbReference type="EMDB" id="EMD-24271"/>
<dbReference type="EMDB" id="EMD-24290"/>
<dbReference type="EMDB" id="EMD-24296"/>
<dbReference type="EMDB" id="EMD-26259"/>
<dbReference type="EMDB" id="EMD-26485"/>
<dbReference type="EMDB" id="EMD-26651"/>
<dbReference type="EMDB" id="EMD-26686"/>
<dbReference type="EMDB" id="EMD-26703"/>
<dbReference type="EMDB" id="EMD-26941"/>
<dbReference type="EMDB" id="EMD-28610"/>
<dbReference type="EMDB" id="EMD-28632"/>
<dbReference type="EMDB" id="EMD-28633"/>
<dbReference type="EMDB" id="EMD-28634"/>
<dbReference type="EMDB" id="EMD-28635"/>
<dbReference type="EMDB" id="EMD-28636"/>
<dbReference type="EMDB" id="EMD-28642"/>
<dbReference type="EMDB" id="EMD-28643"/>
<dbReference type="EMDB" id="EMD-30108"/>
<dbReference type="EMDB" id="EMD-30170"/>
<dbReference type="EMDB" id="EMD-30174"/>
<dbReference type="EMDB" id="EMD-3461"/>
<dbReference type="EMDB" id="EMD-34725"/>
<dbReference type="EMDB" id="EMD-36839"/>
<dbReference type="EMDB" id="EMD-36945"/>
<dbReference type="EMDB" id="EMD-38660"/>
<dbReference type="EMDB" id="EMD-40990"/>
<dbReference type="EMDB" id="EMD-40991"/>
<dbReference type="EMDB" id="EMD-40992"/>
<dbReference type="EMDB" id="EMD-40993"/>
<dbReference type="EMDB" id="EMD-40997"/>
<dbReference type="EMDB" id="EMD-40998"/>
<dbReference type="EMDB" id="EMD-40999"/>
<dbReference type="EMDB" id="EMD-41000"/>
<dbReference type="EMDB" id="EMD-41001"/>
<dbReference type="EMDB" id="EMD-41002"/>
<dbReference type="EMDB" id="EMD-4140"/>
<dbReference type="EMDB" id="EMD-43017"/>
<dbReference type="EMDB" id="EMD-4302"/>
<dbReference type="EMDB" id="EMD-43021"/>
<dbReference type="EMDB" id="EMD-43027"/>
<dbReference type="EMDB" id="EMD-4427"/>
<dbReference type="EMDB" id="EMD-4474"/>
<dbReference type="EMDB" id="EMD-4560"/>
<dbReference type="EMDB" id="EMD-4630"/>
<dbReference type="EMDB" id="EMD-4636"/>
<dbReference type="EMDB" id="EMD-4751"/>
<dbReference type="EMDB" id="EMD-4752"/>
<dbReference type="EMDB" id="EMD-4753"/>
<dbReference type="EMDB" id="EMD-4884"/>
<dbReference type="EMDB" id="EMD-50259"/>
<dbReference type="EMDB" id="EMD-6878"/>
<dbReference type="EMDB" id="EMD-7324"/>
<dbReference type="EMDB" id="EMD-8362"/>
<dbReference type="EMDB" id="EMD-8368"/>
<dbReference type="SMR" id="P14126"/>
<dbReference type="BioGRID" id="34462">
    <property type="interactions" value="500"/>
</dbReference>
<dbReference type="ComplexPortal" id="CPX-1601">
    <property type="entry name" value="60S cytosolic large ribosomal subunit"/>
</dbReference>
<dbReference type="DIP" id="DIP-6264N"/>
<dbReference type="FunCoup" id="P14126">
    <property type="interactions" value="1062"/>
</dbReference>
<dbReference type="IntAct" id="P14126">
    <property type="interactions" value="248"/>
</dbReference>
<dbReference type="MINT" id="P14126"/>
<dbReference type="STRING" id="4932.YOR063W"/>
<dbReference type="CarbonylDB" id="P14126"/>
<dbReference type="iPTMnet" id="P14126"/>
<dbReference type="PaxDb" id="4932-YOR063W"/>
<dbReference type="PeptideAtlas" id="P14126"/>
<dbReference type="EnsemblFungi" id="YOR063W_mRNA">
    <property type="protein sequence ID" value="YOR063W"/>
    <property type="gene ID" value="YOR063W"/>
</dbReference>
<dbReference type="GeneID" id="854229"/>
<dbReference type="KEGG" id="sce:YOR063W"/>
<dbReference type="AGR" id="SGD:S000005589"/>
<dbReference type="SGD" id="S000005589">
    <property type="gene designation" value="RPL3"/>
</dbReference>
<dbReference type="VEuPathDB" id="FungiDB:YOR063W"/>
<dbReference type="eggNOG" id="KOG0746">
    <property type="taxonomic scope" value="Eukaryota"/>
</dbReference>
<dbReference type="GeneTree" id="ENSGT00390000017606"/>
<dbReference type="HOGENOM" id="CLU_033361_2_1_1"/>
<dbReference type="InParanoid" id="P14126"/>
<dbReference type="OMA" id="QRTEYNK"/>
<dbReference type="OrthoDB" id="1611972at2759"/>
<dbReference type="BioCyc" id="YEAST:G3O-33603-MONOMER"/>
<dbReference type="Reactome" id="R-SCE-156827">
    <property type="pathway name" value="L13a-mediated translational silencing of Ceruloplasmin expression"/>
</dbReference>
<dbReference type="Reactome" id="R-SCE-1799339">
    <property type="pathway name" value="SRP-dependent cotranslational protein targeting to membrane"/>
</dbReference>
<dbReference type="Reactome" id="R-SCE-72689">
    <property type="pathway name" value="Formation of a pool of free 40S subunits"/>
</dbReference>
<dbReference type="Reactome" id="R-SCE-72706">
    <property type="pathway name" value="GTP hydrolysis and joining of the 60S ribosomal subunit"/>
</dbReference>
<dbReference type="Reactome" id="R-SCE-975956">
    <property type="pathway name" value="Nonsense Mediated Decay (NMD) independent of the Exon Junction Complex (EJC)"/>
</dbReference>
<dbReference type="Reactome" id="R-SCE-975957">
    <property type="pathway name" value="Nonsense Mediated Decay (NMD) enhanced by the Exon Junction Complex (EJC)"/>
</dbReference>
<dbReference type="BioGRID-ORCS" id="854229">
    <property type="hits" value="6 hits in 10 CRISPR screens"/>
</dbReference>
<dbReference type="PRO" id="PR:P14126"/>
<dbReference type="Proteomes" id="UP000002311">
    <property type="component" value="Chromosome XV"/>
</dbReference>
<dbReference type="RNAct" id="P14126">
    <property type="molecule type" value="protein"/>
</dbReference>
<dbReference type="GO" id="GO:0005737">
    <property type="term" value="C:cytoplasm"/>
    <property type="evidence" value="ECO:0000303"/>
    <property type="project" value="ComplexPortal"/>
</dbReference>
<dbReference type="GO" id="GO:0005829">
    <property type="term" value="C:cytosol"/>
    <property type="evidence" value="ECO:0000304"/>
    <property type="project" value="Reactome"/>
</dbReference>
<dbReference type="GO" id="GO:0022625">
    <property type="term" value="C:cytosolic large ribosomal subunit"/>
    <property type="evidence" value="ECO:0000314"/>
    <property type="project" value="SGD"/>
</dbReference>
<dbReference type="GO" id="GO:0003723">
    <property type="term" value="F:RNA binding"/>
    <property type="evidence" value="ECO:0000318"/>
    <property type="project" value="GO_Central"/>
</dbReference>
<dbReference type="GO" id="GO:0003735">
    <property type="term" value="F:structural constituent of ribosome"/>
    <property type="evidence" value="ECO:0000318"/>
    <property type="project" value="GO_Central"/>
</dbReference>
<dbReference type="GO" id="GO:0002181">
    <property type="term" value="P:cytoplasmic translation"/>
    <property type="evidence" value="ECO:0000303"/>
    <property type="project" value="ComplexPortal"/>
</dbReference>
<dbReference type="GO" id="GO:1990145">
    <property type="term" value="P:maintenance of translational fidelity"/>
    <property type="evidence" value="ECO:0000315"/>
    <property type="project" value="SGD"/>
</dbReference>
<dbReference type="GO" id="GO:0000027">
    <property type="term" value="P:ribosomal large subunit assembly"/>
    <property type="evidence" value="ECO:0000315"/>
    <property type="project" value="SGD"/>
</dbReference>
<dbReference type="GO" id="GO:0006364">
    <property type="term" value="P:rRNA processing"/>
    <property type="evidence" value="ECO:0000315"/>
    <property type="project" value="SGD"/>
</dbReference>
<dbReference type="GO" id="GO:0006412">
    <property type="term" value="P:translation"/>
    <property type="evidence" value="ECO:0000318"/>
    <property type="project" value="GO_Central"/>
</dbReference>
<dbReference type="GO" id="GO:0006414">
    <property type="term" value="P:translational elongation"/>
    <property type="evidence" value="ECO:0000315"/>
    <property type="project" value="SGD"/>
</dbReference>
<dbReference type="FunFam" id="2.40.30.10:FF:000079">
    <property type="entry name" value="60S ribosomal protein L3"/>
    <property type="match status" value="1"/>
</dbReference>
<dbReference type="FunFam" id="3.30.1430.10:FF:000001">
    <property type="entry name" value="60S ribosomal protein L3"/>
    <property type="match status" value="1"/>
</dbReference>
<dbReference type="FunFam" id="4.10.960.10:FF:000002">
    <property type="entry name" value="60S ribosomal protein L3"/>
    <property type="match status" value="1"/>
</dbReference>
<dbReference type="FunFam" id="2.40.30.10:FF:000351">
    <property type="entry name" value="Ribosomal protein L3"/>
    <property type="match status" value="1"/>
</dbReference>
<dbReference type="Gene3D" id="3.30.1430.10">
    <property type="match status" value="1"/>
</dbReference>
<dbReference type="Gene3D" id="4.10.960.10">
    <property type="entry name" value="Ribosomal protein L3, domain 3"/>
    <property type="match status" value="1"/>
</dbReference>
<dbReference type="Gene3D" id="2.40.30.10">
    <property type="entry name" value="Translation factors"/>
    <property type="match status" value="1"/>
</dbReference>
<dbReference type="InterPro" id="IPR045077">
    <property type="entry name" value="L3_arc_euk"/>
</dbReference>
<dbReference type="InterPro" id="IPR044892">
    <property type="entry name" value="Ribosomal_L3_dom_3_arc_sf"/>
</dbReference>
<dbReference type="InterPro" id="IPR000597">
    <property type="entry name" value="Ribosomal_uL3"/>
</dbReference>
<dbReference type="InterPro" id="IPR019926">
    <property type="entry name" value="Ribosomal_uL3_CS"/>
</dbReference>
<dbReference type="InterPro" id="IPR009000">
    <property type="entry name" value="Transl_B-barrel_sf"/>
</dbReference>
<dbReference type="PANTHER" id="PTHR11363">
    <property type="entry name" value="60S RIBOSOMAL PROTEIN L3-RELATED"/>
    <property type="match status" value="1"/>
</dbReference>
<dbReference type="PANTHER" id="PTHR11363:SF5">
    <property type="entry name" value="LARGE RIBOSOMAL SUBUNIT PROTEIN UL3"/>
    <property type="match status" value="1"/>
</dbReference>
<dbReference type="Pfam" id="PF00297">
    <property type="entry name" value="Ribosomal_L3"/>
    <property type="match status" value="1"/>
</dbReference>
<dbReference type="SUPFAM" id="SSF50447">
    <property type="entry name" value="Translation proteins"/>
    <property type="match status" value="1"/>
</dbReference>
<dbReference type="PROSITE" id="PS00474">
    <property type="entry name" value="RIBOSOMAL_L3"/>
    <property type="match status" value="1"/>
</dbReference>